<keyword id="KW-0002">3D-structure</keyword>
<keyword id="KW-0521">NADP</keyword>
<keyword id="KW-0560">Oxidoreductase</keyword>
<keyword id="KW-1185">Reference proteome</keyword>
<evidence type="ECO:0000250" key="1">
    <source>
        <dbReference type="UniProtKB" id="Q9LD14"/>
    </source>
</evidence>
<evidence type="ECO:0000269" key="2">
    <source>
    </source>
</evidence>
<evidence type="ECO:0000269" key="3">
    <source>
    </source>
</evidence>
<evidence type="ECO:0000269" key="4">
    <source>
    </source>
</evidence>
<evidence type="ECO:0000303" key="5">
    <source>
    </source>
</evidence>
<evidence type="ECO:0000305" key="6"/>
<evidence type="ECO:0000312" key="7">
    <source>
        <dbReference type="Araport" id="AT1G32100"/>
    </source>
</evidence>
<evidence type="ECO:0000312" key="8">
    <source>
        <dbReference type="EMBL" id="AAG23447.1"/>
    </source>
</evidence>
<evidence type="ECO:0007744" key="9">
    <source>
        <dbReference type="PDB" id="7CSA"/>
    </source>
</evidence>
<evidence type="ECO:0007744" key="10">
    <source>
        <dbReference type="PDB" id="7CSB"/>
    </source>
</evidence>
<evidence type="ECO:0007744" key="11">
    <source>
        <dbReference type="PDB" id="7CSC"/>
    </source>
</evidence>
<evidence type="ECO:0007744" key="12">
    <source>
        <dbReference type="PDB" id="7CSD"/>
    </source>
</evidence>
<evidence type="ECO:0007829" key="13">
    <source>
        <dbReference type="PDB" id="7CS9"/>
    </source>
</evidence>
<evidence type="ECO:0007829" key="14">
    <source>
        <dbReference type="PDB" id="7CSD"/>
    </source>
</evidence>
<evidence type="ECO:0007829" key="15">
    <source>
        <dbReference type="PDB" id="7CSF"/>
    </source>
</evidence>
<sequence>MGESKRTEKTRVLVVGATGYIGKRIVRACLAEGHETYVLQRPEIGLEIEKVQLFLSFKKLGARIVEGSFSDHQSLVSAVKLVDVVVSAMSGVHFRSHNILVQLKLVEAIKEAGNVKRFLPSEFGMDPPRMGHALPPGRETFDQKMEVRQAIEAAGIPYTYVVGACFAAYFAGNLSQMVTLLPPKEKVNIYGDGNVKVVFADEDDIAKYTAKTLNDPRTLNKTVNIRPPDNVLTQLELVQIWEKLTGKELEKTNIAAQDFLANIEQMEIPHQAGIGHFYHIFYEGCLTDHEVGEDEEASSLYPDVKYKRMDDYLRMFL</sequence>
<protein>
    <recommendedName>
        <fullName evidence="5">Pinoresinol reductase 1</fullName>
        <shortName evidence="5">AtPrR1</shortName>
    </recommendedName>
    <alternativeName>
        <fullName evidence="6">(+)-pinoresinol reductase</fullName>
        <ecNumber evidence="2">1.23.1.1</ecNumber>
    </alternativeName>
    <alternativeName>
        <fullName evidence="6">(-)-pinoresinol reductase</fullName>
        <ecNumber evidence="2">1.23.1.3</ecNumber>
    </alternativeName>
    <alternativeName>
        <fullName evidence="5">Pinoresinol-lariciresinol reductase 1</fullName>
        <shortName evidence="5">AtPLR1</shortName>
    </alternativeName>
</protein>
<comment type="function">
    <text evidence="2 3">Reductase involved in lignan biosynthesis (PubMed:18347017, PubMed:25107662). Involved in secondary cell wall biosynthesis in fiber cells (PubMed:25107662). Unlike conventional pinoresinol reductases that can reduce both pinoresinol and lariciresinol, PRR1 shows a strict substrate preference toward pinoresinol (PubMed:18347017). Active on both (+) and (-)-pinoresinol (PubMed:18347017). Abstracts the 4R-hydride from the NADPH cofactor during catalysis (PubMed:18347017).</text>
</comment>
<comment type="catalytic activity">
    <reaction evidence="2">
        <text>(-)-lariciresinol + NADP(+) = (-)-pinoresinol + NADPH + H(+)</text>
        <dbReference type="Rhea" id="RHEA:34427"/>
        <dbReference type="ChEBI" id="CHEBI:15378"/>
        <dbReference type="ChEBI" id="CHEBI:57783"/>
        <dbReference type="ChEBI" id="CHEBI:58349"/>
        <dbReference type="ChEBI" id="CHEBI:67244"/>
        <dbReference type="ChEBI" id="CHEBI:67245"/>
        <dbReference type="EC" id="1.23.1.3"/>
    </reaction>
</comment>
<comment type="catalytic activity">
    <reaction evidence="2">
        <text>(+)-lariciresinol + NADP(+) = (+)-pinoresinol + NADPH + H(+)</text>
        <dbReference type="Rhea" id="RHEA:34419"/>
        <dbReference type="ChEBI" id="CHEBI:40"/>
        <dbReference type="ChEBI" id="CHEBI:15378"/>
        <dbReference type="ChEBI" id="CHEBI:57783"/>
        <dbReference type="ChEBI" id="CHEBI:58349"/>
        <dbReference type="ChEBI" id="CHEBI:67246"/>
        <dbReference type="EC" id="1.23.1.1"/>
    </reaction>
</comment>
<comment type="biophysicochemical properties">
    <kinetics>
        <KM evidence="2">1.6 uM for (+)-pinoresinol</KM>
        <KM evidence="2">7.3 uM for (-)-pinoresinol</KM>
        <Vmax evidence="2">35.5 nmol/min/mg enzyme toward pinoresinol</Vmax>
        <Vmax evidence="2">1.1 nmol/min/mg enzyme toward lariciresinol</Vmax>
    </kinetics>
</comment>
<comment type="subunit">
    <text evidence="4">Forms homodimers.</text>
</comment>
<comment type="tissue specificity">
    <text evidence="2">Expressed in roots and stems.</text>
</comment>
<comment type="disruption phenotype">
    <text evidence="2 3">No significant difference in lariciresinol content (PubMed:18347017). Prr1 and prr2 double mutants show a complete inhibition of lariciresinol biosynthesis (PubMed:18347017). Elevated levels of pinoresinol, reduced lignin content in the fiber cells, and a slightly altered lignin structure with low abundance of cinnamyl alcohol end groups (PubMed:25107662).</text>
</comment>
<comment type="similarity">
    <text evidence="6">Belongs to the NmrA-type oxidoreductase family. Isoflavone reductase subfamily.</text>
</comment>
<name>PILR1_ARATH</name>
<reference key="1">
    <citation type="journal article" date="2000" name="Nature">
        <title>Sequence and analysis of chromosome 1 of the plant Arabidopsis thaliana.</title>
        <authorList>
            <person name="Theologis A."/>
            <person name="Ecker J.R."/>
            <person name="Palm C.J."/>
            <person name="Federspiel N.A."/>
            <person name="Kaul S."/>
            <person name="White O."/>
            <person name="Alonso J."/>
            <person name="Altafi H."/>
            <person name="Araujo R."/>
            <person name="Bowman C.L."/>
            <person name="Brooks S.Y."/>
            <person name="Buehler E."/>
            <person name="Chan A."/>
            <person name="Chao Q."/>
            <person name="Chen H."/>
            <person name="Cheuk R.F."/>
            <person name="Chin C.W."/>
            <person name="Chung M.K."/>
            <person name="Conn L."/>
            <person name="Conway A.B."/>
            <person name="Conway A.R."/>
            <person name="Creasy T.H."/>
            <person name="Dewar K."/>
            <person name="Dunn P."/>
            <person name="Etgu P."/>
            <person name="Feldblyum T.V."/>
            <person name="Feng J.-D."/>
            <person name="Fong B."/>
            <person name="Fujii C.Y."/>
            <person name="Gill J.E."/>
            <person name="Goldsmith A.D."/>
            <person name="Haas B."/>
            <person name="Hansen N.F."/>
            <person name="Hughes B."/>
            <person name="Huizar L."/>
            <person name="Hunter J.L."/>
            <person name="Jenkins J."/>
            <person name="Johnson-Hopson C."/>
            <person name="Khan S."/>
            <person name="Khaykin E."/>
            <person name="Kim C.J."/>
            <person name="Koo H.L."/>
            <person name="Kremenetskaia I."/>
            <person name="Kurtz D.B."/>
            <person name="Kwan A."/>
            <person name="Lam B."/>
            <person name="Langin-Hooper S."/>
            <person name="Lee A."/>
            <person name="Lee J.M."/>
            <person name="Lenz C.A."/>
            <person name="Li J.H."/>
            <person name="Li Y.-P."/>
            <person name="Lin X."/>
            <person name="Liu S.X."/>
            <person name="Liu Z.A."/>
            <person name="Luros J.S."/>
            <person name="Maiti R."/>
            <person name="Marziali A."/>
            <person name="Militscher J."/>
            <person name="Miranda M."/>
            <person name="Nguyen M."/>
            <person name="Nierman W.C."/>
            <person name="Osborne B.I."/>
            <person name="Pai G."/>
            <person name="Peterson J."/>
            <person name="Pham P.K."/>
            <person name="Rizzo M."/>
            <person name="Rooney T."/>
            <person name="Rowley D."/>
            <person name="Sakano H."/>
            <person name="Salzberg S.L."/>
            <person name="Schwartz J.R."/>
            <person name="Shinn P."/>
            <person name="Southwick A.M."/>
            <person name="Sun H."/>
            <person name="Tallon L.J."/>
            <person name="Tambunga G."/>
            <person name="Toriumi M.J."/>
            <person name="Town C.D."/>
            <person name="Utterback T."/>
            <person name="Van Aken S."/>
            <person name="Vaysberg M."/>
            <person name="Vysotskaia V.S."/>
            <person name="Walker M."/>
            <person name="Wu D."/>
            <person name="Yu G."/>
            <person name="Fraser C.M."/>
            <person name="Venter J.C."/>
            <person name="Davis R.W."/>
        </authorList>
    </citation>
    <scope>NUCLEOTIDE SEQUENCE [LARGE SCALE GENOMIC DNA]</scope>
    <source>
        <strain>cv. Columbia</strain>
    </source>
</reference>
<reference key="2">
    <citation type="journal article" date="2017" name="Plant J.">
        <title>Araport11: a complete reannotation of the Arabidopsis thaliana reference genome.</title>
        <authorList>
            <person name="Cheng C.Y."/>
            <person name="Krishnakumar V."/>
            <person name="Chan A.P."/>
            <person name="Thibaud-Nissen F."/>
            <person name="Schobel S."/>
            <person name="Town C.D."/>
        </authorList>
    </citation>
    <scope>GENOME REANNOTATION</scope>
    <source>
        <strain>cv. Columbia</strain>
    </source>
</reference>
<reference key="3">
    <citation type="journal article" date="2003" name="Science">
        <title>Empirical analysis of transcriptional activity in the Arabidopsis genome.</title>
        <authorList>
            <person name="Yamada K."/>
            <person name="Lim J."/>
            <person name="Dale J.M."/>
            <person name="Chen H."/>
            <person name="Shinn P."/>
            <person name="Palm C.J."/>
            <person name="Southwick A.M."/>
            <person name="Wu H.C."/>
            <person name="Kim C.J."/>
            <person name="Nguyen M."/>
            <person name="Pham P.K."/>
            <person name="Cheuk R.F."/>
            <person name="Karlin-Newmann G."/>
            <person name="Liu S.X."/>
            <person name="Lam B."/>
            <person name="Sakano H."/>
            <person name="Wu T."/>
            <person name="Yu G."/>
            <person name="Miranda M."/>
            <person name="Quach H.L."/>
            <person name="Tripp M."/>
            <person name="Chang C.H."/>
            <person name="Lee J.M."/>
            <person name="Toriumi M.J."/>
            <person name="Chan M.M."/>
            <person name="Tang C.C."/>
            <person name="Onodera C.S."/>
            <person name="Deng J.M."/>
            <person name="Akiyama K."/>
            <person name="Ansari Y."/>
            <person name="Arakawa T."/>
            <person name="Banh J."/>
            <person name="Banno F."/>
            <person name="Bowser L."/>
            <person name="Brooks S.Y."/>
            <person name="Carninci P."/>
            <person name="Chao Q."/>
            <person name="Choy N."/>
            <person name="Enju A."/>
            <person name="Goldsmith A.D."/>
            <person name="Gurjal M."/>
            <person name="Hansen N.F."/>
            <person name="Hayashizaki Y."/>
            <person name="Johnson-Hopson C."/>
            <person name="Hsuan V.W."/>
            <person name="Iida K."/>
            <person name="Karnes M."/>
            <person name="Khan S."/>
            <person name="Koesema E."/>
            <person name="Ishida J."/>
            <person name="Jiang P.X."/>
            <person name="Jones T."/>
            <person name="Kawai J."/>
            <person name="Kamiya A."/>
            <person name="Meyers C."/>
            <person name="Nakajima M."/>
            <person name="Narusaka M."/>
            <person name="Seki M."/>
            <person name="Sakurai T."/>
            <person name="Satou M."/>
            <person name="Tamse R."/>
            <person name="Vaysberg M."/>
            <person name="Wallender E.K."/>
            <person name="Wong C."/>
            <person name="Yamamura Y."/>
            <person name="Yuan S."/>
            <person name="Shinozaki K."/>
            <person name="Davis R.W."/>
            <person name="Theologis A."/>
            <person name="Ecker J.R."/>
        </authorList>
    </citation>
    <scope>NUCLEOTIDE SEQUENCE [LARGE SCALE MRNA]</scope>
    <source>
        <strain>cv. Columbia</strain>
    </source>
</reference>
<reference key="4">
    <citation type="submission" date="2002-03" db="EMBL/GenBank/DDBJ databases">
        <title>Full-length cDNA from Arabidopsis thaliana.</title>
        <authorList>
            <person name="Brover V.V."/>
            <person name="Troukhan M.E."/>
            <person name="Alexandrov N.A."/>
            <person name="Lu Y.-P."/>
            <person name="Flavell R.B."/>
            <person name="Feldmann K.A."/>
        </authorList>
    </citation>
    <scope>NUCLEOTIDE SEQUENCE [LARGE SCALE MRNA]</scope>
</reference>
<reference key="5">
    <citation type="journal article" date="2008" name="J. Biol. Chem.">
        <title>Characterization of Arabidopsis thaliana pinoresinol reductase, a new type of enzyme involved in lignan biosynthesis.</title>
        <authorList>
            <person name="Nakatsubo T."/>
            <person name="Mizutani M."/>
            <person name="Suzuki S."/>
            <person name="Hattori T."/>
            <person name="Umezawa T."/>
        </authorList>
    </citation>
    <scope>FUNCTION</scope>
    <scope>CATALYTIC ACTIVITY</scope>
    <scope>BIOPHYSICOCHEMICAL PROPERTIES</scope>
    <scope>DISRUPTION PHENOTYPE</scope>
    <scope>TISSUE SPECIFICITY</scope>
</reference>
<reference key="6">
    <citation type="journal article" date="2015" name="Phytochemistry">
        <title>Pinoresinol reductase 1 impacts lignin distribution during secondary cell wall biosynthesis in Arabidopsis.</title>
        <authorList>
            <person name="Zhao Q."/>
            <person name="Zeng Y."/>
            <person name="Yin Y."/>
            <person name="Pu Y."/>
            <person name="Jackson L.A."/>
            <person name="Engle N.L."/>
            <person name="Martin M.Z."/>
            <person name="Tschaplinski T.J."/>
            <person name="Ding S.Y."/>
            <person name="Ragauskas A.J."/>
            <person name="Dixon R.A."/>
        </authorList>
    </citation>
    <scope>FUNCTION</scope>
    <scope>DISRUPTION PHENOTYPE</scope>
</reference>
<reference key="7">
    <citation type="journal article" date="2021" name="Nat. Commun.">
        <title>Structure-based engineering of substrate specificity for pinoresinol-lariciresinol reductases.</title>
        <authorList>
            <person name="Xiao Y."/>
            <person name="Shao K."/>
            <person name="Zhou J."/>
            <person name="Wang L."/>
            <person name="Ma X."/>
            <person name="Wu D."/>
            <person name="Yang Y."/>
            <person name="Chen J."/>
            <person name="Feng J."/>
            <person name="Qiu S."/>
            <person name="Lv Z."/>
            <person name="Zhang L."/>
            <person name="Zhang P."/>
            <person name="Chen W."/>
        </authorList>
    </citation>
    <scope>X-RAY CRYSTALLOGRAPHY (1.80 ANGSTROMS) IN COMPLEX WITH PINORESINOL AND NADP</scope>
    <scope>SUBUNIT</scope>
</reference>
<feature type="chain" id="PRO_0000422929" description="Pinoresinol reductase 1">
    <location>
        <begin position="1"/>
        <end position="317"/>
    </location>
</feature>
<feature type="active site" description="Proton acceptor" evidence="1">
    <location>
        <position position="144"/>
    </location>
</feature>
<feature type="binding site" evidence="4 9 10">
    <location>
        <position position="18"/>
    </location>
    <ligand>
        <name>NADP(+)</name>
        <dbReference type="ChEBI" id="CHEBI:58349"/>
    </ligand>
</feature>
<feature type="binding site" evidence="4 9 10">
    <location>
        <position position="20"/>
    </location>
    <ligand>
        <name>NADP(+)</name>
        <dbReference type="ChEBI" id="CHEBI:58349"/>
    </ligand>
</feature>
<feature type="binding site" evidence="4 9 10">
    <location>
        <position position="21"/>
    </location>
    <ligand>
        <name>NADP(+)</name>
        <dbReference type="ChEBI" id="CHEBI:58349"/>
    </ligand>
</feature>
<feature type="binding site" evidence="4 9 10">
    <location>
        <position position="41"/>
    </location>
    <ligand>
        <name>NADP(+)</name>
        <dbReference type="ChEBI" id="CHEBI:58349"/>
    </ligand>
</feature>
<feature type="binding site" evidence="4 9 10">
    <location>
        <position position="50"/>
    </location>
    <ligand>
        <name>NADP(+)</name>
        <dbReference type="ChEBI" id="CHEBI:58349"/>
    </ligand>
</feature>
<feature type="binding site" evidence="4 9 10">
    <location>
        <position position="90"/>
    </location>
    <ligand>
        <name>NADP(+)</name>
        <dbReference type="ChEBI" id="CHEBI:58349"/>
    </ligand>
</feature>
<feature type="binding site" evidence="4 10 11">
    <location>
        <position position="91"/>
    </location>
    <ligand>
        <name>NADP(+)</name>
        <dbReference type="ChEBI" id="CHEBI:58349"/>
    </ligand>
</feature>
<feature type="binding site" evidence="4 10 11">
    <location>
        <position position="95"/>
    </location>
    <ligand>
        <name>NADP(+)</name>
        <dbReference type="ChEBI" id="CHEBI:58349"/>
    </ligand>
</feature>
<feature type="binding site" evidence="4 10 11">
    <location>
        <position position="98"/>
    </location>
    <ligand>
        <name>NADP(+)</name>
        <dbReference type="ChEBI" id="CHEBI:58349"/>
    </ligand>
</feature>
<feature type="binding site" evidence="4 9 10">
    <location>
        <position position="121"/>
    </location>
    <ligand>
        <name>NADP(+)</name>
        <dbReference type="ChEBI" id="CHEBI:58349"/>
    </ligand>
</feature>
<feature type="binding site" evidence="4 9 12">
    <location>
        <position position="122"/>
    </location>
    <ligand>
        <name>NADP(+)</name>
        <dbReference type="ChEBI" id="CHEBI:58349"/>
    </ligand>
</feature>
<feature type="binding site" evidence="4 10 11">
    <location>
        <position position="125"/>
    </location>
    <ligand>
        <name>(-)-pinoresinol</name>
        <dbReference type="ChEBI" id="CHEBI:67245"/>
    </ligand>
</feature>
<feature type="binding site" evidence="4 9 10">
    <location>
        <position position="144"/>
    </location>
    <ligand>
        <name>NADP(+)</name>
        <dbReference type="ChEBI" id="CHEBI:58349"/>
    </ligand>
</feature>
<feature type="binding site" evidence="4 9 10">
    <location>
        <position position="166"/>
    </location>
    <ligand>
        <name>NADP(+)</name>
        <dbReference type="ChEBI" id="CHEBI:58349"/>
    </ligand>
</feature>
<feature type="binding site" evidence="4 11">
    <location>
        <position position="177"/>
    </location>
    <ligand>
        <name>(-)-pinoresinol</name>
        <dbReference type="ChEBI" id="CHEBI:67245"/>
    </ligand>
</feature>
<feature type="binding site" evidence="4 10">
    <location>
        <position position="178"/>
    </location>
    <ligand>
        <name>(-)-pinoresinol</name>
        <dbReference type="ChEBI" id="CHEBI:67245"/>
    </ligand>
</feature>
<feature type="sequence conflict" description="In Ref. 4; AAM64780." evidence="6" ref="4">
    <original>N</original>
    <variation>H</variation>
    <location>
        <position position="262"/>
    </location>
</feature>
<feature type="strand" evidence="14">
    <location>
        <begin position="11"/>
        <end position="16"/>
    </location>
</feature>
<feature type="helix" evidence="14">
    <location>
        <begin position="20"/>
        <end position="32"/>
    </location>
</feature>
<feature type="strand" evidence="14">
    <location>
        <begin position="35"/>
        <end position="40"/>
    </location>
</feature>
<feature type="helix" evidence="14">
    <location>
        <begin position="42"/>
        <end position="44"/>
    </location>
</feature>
<feature type="helix" evidence="14">
    <location>
        <begin position="48"/>
        <end position="59"/>
    </location>
</feature>
<feature type="strand" evidence="14">
    <location>
        <begin position="63"/>
        <end position="66"/>
    </location>
</feature>
<feature type="strand" evidence="13">
    <location>
        <begin position="69"/>
        <end position="71"/>
    </location>
</feature>
<feature type="helix" evidence="14">
    <location>
        <begin position="72"/>
        <end position="80"/>
    </location>
</feature>
<feature type="strand" evidence="14">
    <location>
        <begin position="83"/>
        <end position="87"/>
    </location>
</feature>
<feature type="turn" evidence="14">
    <location>
        <begin position="93"/>
        <end position="95"/>
    </location>
</feature>
<feature type="helix" evidence="14">
    <location>
        <begin position="99"/>
        <end position="101"/>
    </location>
</feature>
<feature type="helix" evidence="14">
    <location>
        <begin position="102"/>
        <end position="112"/>
    </location>
</feature>
<feature type="strand" evidence="14">
    <location>
        <begin position="116"/>
        <end position="119"/>
    </location>
</feature>
<feature type="helix" evidence="14">
    <location>
        <begin position="127"/>
        <end position="129"/>
    </location>
</feature>
<feature type="turn" evidence="14">
    <location>
        <begin position="135"/>
        <end position="137"/>
    </location>
</feature>
<feature type="helix" evidence="14">
    <location>
        <begin position="138"/>
        <end position="153"/>
    </location>
</feature>
<feature type="strand" evidence="14">
    <location>
        <begin position="158"/>
        <end position="162"/>
    </location>
</feature>
<feature type="helix" evidence="14">
    <location>
        <begin position="167"/>
        <end position="170"/>
    </location>
</feature>
<feature type="turn" evidence="14">
    <location>
        <begin position="171"/>
        <end position="175"/>
    </location>
</feature>
<feature type="strand" evidence="14">
    <location>
        <begin position="184"/>
        <end position="190"/>
    </location>
</feature>
<feature type="strand" evidence="14">
    <location>
        <begin position="195"/>
        <end position="200"/>
    </location>
</feature>
<feature type="helix" evidence="14">
    <location>
        <begin position="202"/>
        <end position="212"/>
    </location>
</feature>
<feature type="helix" evidence="14">
    <location>
        <begin position="216"/>
        <end position="218"/>
    </location>
</feature>
<feature type="strand" evidence="14">
    <location>
        <begin position="221"/>
        <end position="224"/>
    </location>
</feature>
<feature type="helix" evidence="14">
    <location>
        <begin position="228"/>
        <end position="230"/>
    </location>
</feature>
<feature type="strand" evidence="14">
    <location>
        <begin position="231"/>
        <end position="233"/>
    </location>
</feature>
<feature type="helix" evidence="14">
    <location>
        <begin position="234"/>
        <end position="245"/>
    </location>
</feature>
<feature type="strand" evidence="14">
    <location>
        <begin position="250"/>
        <end position="254"/>
    </location>
</feature>
<feature type="helix" evidence="14">
    <location>
        <begin position="256"/>
        <end position="259"/>
    </location>
</feature>
<feature type="turn" evidence="15">
    <location>
        <begin position="260"/>
        <end position="262"/>
    </location>
</feature>
<feature type="helix" evidence="14">
    <location>
        <begin position="263"/>
        <end position="265"/>
    </location>
</feature>
<feature type="helix" evidence="14">
    <location>
        <begin position="268"/>
        <end position="281"/>
    </location>
</feature>
<feature type="turn" evidence="14">
    <location>
        <begin position="285"/>
        <end position="287"/>
    </location>
</feature>
<feature type="helix" evidence="14">
    <location>
        <begin position="293"/>
        <end position="295"/>
    </location>
</feature>
<feature type="helix" evidence="14">
    <location>
        <begin position="297"/>
        <end position="300"/>
    </location>
</feature>
<feature type="helix" evidence="14">
    <location>
        <begin position="309"/>
        <end position="314"/>
    </location>
</feature>
<dbReference type="EC" id="1.23.1.1" evidence="2"/>
<dbReference type="EC" id="1.23.1.3" evidence="2"/>
<dbReference type="EMBL" id="AC084165">
    <property type="protein sequence ID" value="AAG23447.1"/>
    <property type="molecule type" value="Genomic_DNA"/>
</dbReference>
<dbReference type="EMBL" id="CP002684">
    <property type="protein sequence ID" value="AEE31436.1"/>
    <property type="molecule type" value="Genomic_DNA"/>
</dbReference>
<dbReference type="EMBL" id="AY065214">
    <property type="protein sequence ID" value="AAL38690.1"/>
    <property type="molecule type" value="mRNA"/>
</dbReference>
<dbReference type="EMBL" id="AY096520">
    <property type="protein sequence ID" value="AAM20170.1"/>
    <property type="molecule type" value="mRNA"/>
</dbReference>
<dbReference type="EMBL" id="AY087224">
    <property type="protein sequence ID" value="AAM64780.1"/>
    <property type="molecule type" value="mRNA"/>
</dbReference>
<dbReference type="PIR" id="D86445">
    <property type="entry name" value="D86445"/>
</dbReference>
<dbReference type="RefSeq" id="NP_174490.1">
    <property type="nucleotide sequence ID" value="NM_102944.3"/>
</dbReference>
<dbReference type="PDB" id="7CS9">
    <property type="method" value="X-ray"/>
    <property type="resolution" value="2.80 A"/>
    <property type="chains" value="A/B/C/D=1-317"/>
</dbReference>
<dbReference type="PDB" id="7CSA">
    <property type="method" value="X-ray"/>
    <property type="resolution" value="1.96 A"/>
    <property type="chains" value="A/B/C/D=1-317"/>
</dbReference>
<dbReference type="PDB" id="7CSB">
    <property type="method" value="X-ray"/>
    <property type="resolution" value="2.00 A"/>
    <property type="chains" value="A/B/C/D=1-317"/>
</dbReference>
<dbReference type="PDB" id="7CSC">
    <property type="method" value="X-ray"/>
    <property type="resolution" value="2.52 A"/>
    <property type="chains" value="A/B/C/D/E/F=1-317"/>
</dbReference>
<dbReference type="PDB" id="7CSD">
    <property type="method" value="X-ray"/>
    <property type="resolution" value="1.80 A"/>
    <property type="chains" value="A/B/C/D=1-317"/>
</dbReference>
<dbReference type="PDB" id="7CSE">
    <property type="method" value="X-ray"/>
    <property type="resolution" value="2.44 A"/>
    <property type="chains" value="A/B/C/D/E/F=1-317"/>
</dbReference>
<dbReference type="PDB" id="7CSF">
    <property type="method" value="X-ray"/>
    <property type="resolution" value="1.98 A"/>
    <property type="chains" value="A/B/C/D=1-317"/>
</dbReference>
<dbReference type="PDBsum" id="7CS9"/>
<dbReference type="PDBsum" id="7CSA"/>
<dbReference type="PDBsum" id="7CSB"/>
<dbReference type="PDBsum" id="7CSC"/>
<dbReference type="PDBsum" id="7CSD"/>
<dbReference type="PDBsum" id="7CSE"/>
<dbReference type="PDBsum" id="7CSF"/>
<dbReference type="SMR" id="Q9FVQ6"/>
<dbReference type="BioGRID" id="25336">
    <property type="interactions" value="6"/>
</dbReference>
<dbReference type="FunCoup" id="Q9FVQ6">
    <property type="interactions" value="40"/>
</dbReference>
<dbReference type="IntAct" id="Q9FVQ6">
    <property type="interactions" value="2"/>
</dbReference>
<dbReference type="STRING" id="3702.Q9FVQ6"/>
<dbReference type="PaxDb" id="3702-AT1G32100.1"/>
<dbReference type="ProteomicsDB" id="236734"/>
<dbReference type="EnsemblPlants" id="AT1G32100.1">
    <property type="protein sequence ID" value="AT1G32100.1"/>
    <property type="gene ID" value="AT1G32100"/>
</dbReference>
<dbReference type="GeneID" id="840102"/>
<dbReference type="Gramene" id="AT1G32100.1">
    <property type="protein sequence ID" value="AT1G32100.1"/>
    <property type="gene ID" value="AT1G32100"/>
</dbReference>
<dbReference type="KEGG" id="ath:AT1G32100"/>
<dbReference type="Araport" id="AT1G32100"/>
<dbReference type="TAIR" id="AT1G32100">
    <property type="gene designation" value="PRR1"/>
</dbReference>
<dbReference type="eggNOG" id="ENOG502QQTV">
    <property type="taxonomic scope" value="Eukaryota"/>
</dbReference>
<dbReference type="HOGENOM" id="CLU_060833_0_1_1"/>
<dbReference type="InParanoid" id="Q9FVQ6"/>
<dbReference type="OMA" id="MKEMDYA"/>
<dbReference type="PhylomeDB" id="Q9FVQ6"/>
<dbReference type="BioCyc" id="ARA:AT1G32100-MONOMER"/>
<dbReference type="BRENDA" id="1.23.1.1">
    <property type="organism ID" value="399"/>
</dbReference>
<dbReference type="BRENDA" id="1.23.1.3">
    <property type="organism ID" value="399"/>
</dbReference>
<dbReference type="BRENDA" id="1.23.1.4">
    <property type="organism ID" value="399"/>
</dbReference>
<dbReference type="PRO" id="PR:Q9FVQ6"/>
<dbReference type="Proteomes" id="UP000006548">
    <property type="component" value="Chromosome 1"/>
</dbReference>
<dbReference type="ExpressionAtlas" id="Q9FVQ6">
    <property type="expression patterns" value="baseline and differential"/>
</dbReference>
<dbReference type="GO" id="GO:0010283">
    <property type="term" value="F:pinoresinol reductase activity"/>
    <property type="evidence" value="ECO:0000314"/>
    <property type="project" value="TAIR"/>
</dbReference>
<dbReference type="GO" id="GO:0009807">
    <property type="term" value="P:lignan biosynthetic process"/>
    <property type="evidence" value="ECO:0000314"/>
    <property type="project" value="TAIR"/>
</dbReference>
<dbReference type="CDD" id="cd05259">
    <property type="entry name" value="PCBER_SDR_a"/>
    <property type="match status" value="1"/>
</dbReference>
<dbReference type="Gene3D" id="3.40.50.720">
    <property type="entry name" value="NAD(P)-binding Rossmann-like Domain"/>
    <property type="match status" value="1"/>
</dbReference>
<dbReference type="Gene3D" id="3.90.25.10">
    <property type="entry name" value="UDP-galactose 4-epimerase, domain 1"/>
    <property type="match status" value="1"/>
</dbReference>
<dbReference type="InterPro" id="IPR036291">
    <property type="entry name" value="NAD(P)-bd_dom_sf"/>
</dbReference>
<dbReference type="InterPro" id="IPR008030">
    <property type="entry name" value="NmrA-like"/>
</dbReference>
<dbReference type="InterPro" id="IPR050608">
    <property type="entry name" value="NmrA-type/Isoflavone_red_sf"/>
</dbReference>
<dbReference type="InterPro" id="IPR045312">
    <property type="entry name" value="PCBER-like"/>
</dbReference>
<dbReference type="PANTHER" id="PTHR43349:SF4">
    <property type="entry name" value="PINORESINOL REDUCTASE 1-RELATED"/>
    <property type="match status" value="1"/>
</dbReference>
<dbReference type="PANTHER" id="PTHR43349">
    <property type="entry name" value="PINORESINOL REDUCTASE-RELATED"/>
    <property type="match status" value="1"/>
</dbReference>
<dbReference type="Pfam" id="PF05368">
    <property type="entry name" value="NmrA"/>
    <property type="match status" value="1"/>
</dbReference>
<dbReference type="SUPFAM" id="SSF51735">
    <property type="entry name" value="NAD(P)-binding Rossmann-fold domains"/>
    <property type="match status" value="1"/>
</dbReference>
<gene>
    <name evidence="5" type="primary">PRR1</name>
    <name evidence="5" type="synonym">PLR1</name>
    <name evidence="7" type="ordered locus">At1g32100</name>
    <name evidence="8" type="ORF">F3C3.10</name>
</gene>
<organism>
    <name type="scientific">Arabidopsis thaliana</name>
    <name type="common">Mouse-ear cress</name>
    <dbReference type="NCBI Taxonomy" id="3702"/>
    <lineage>
        <taxon>Eukaryota</taxon>
        <taxon>Viridiplantae</taxon>
        <taxon>Streptophyta</taxon>
        <taxon>Embryophyta</taxon>
        <taxon>Tracheophyta</taxon>
        <taxon>Spermatophyta</taxon>
        <taxon>Magnoliopsida</taxon>
        <taxon>eudicotyledons</taxon>
        <taxon>Gunneridae</taxon>
        <taxon>Pentapetalae</taxon>
        <taxon>rosids</taxon>
        <taxon>malvids</taxon>
        <taxon>Brassicales</taxon>
        <taxon>Brassicaceae</taxon>
        <taxon>Camelineae</taxon>
        <taxon>Arabidopsis</taxon>
    </lineage>
</organism>
<proteinExistence type="evidence at protein level"/>
<accession>Q9FVQ6</accession>
<accession>Q8LBG5</accession>